<protein>
    <recommendedName>
        <fullName evidence="1">Phosphoribosyl-AMP cyclohydrolase</fullName>
        <shortName evidence="1">PRA-CH</shortName>
        <ecNumber evidence="1">3.5.4.19</ecNumber>
    </recommendedName>
</protein>
<sequence>MAFDPASLTYDARGLVPAIAQDHATGEVLMMAWMNAEAVARTLETGRVTYWSRSRQSFWVKGETSGHIQRLVELRIDCDRDCLLLLIEQVGPACHTHRRSCFYTAVREGAEQVFLDPMG</sequence>
<gene>
    <name evidence="1" type="primary">hisI</name>
    <name type="ordered locus">Rsph17025_1163</name>
</gene>
<evidence type="ECO:0000255" key="1">
    <source>
        <dbReference type="HAMAP-Rule" id="MF_01021"/>
    </source>
</evidence>
<reference key="1">
    <citation type="submission" date="2007-04" db="EMBL/GenBank/DDBJ databases">
        <title>Complete sequence of chromosome of Rhodobacter sphaeroides ATCC 17025.</title>
        <authorList>
            <consortium name="US DOE Joint Genome Institute"/>
            <person name="Copeland A."/>
            <person name="Lucas S."/>
            <person name="Lapidus A."/>
            <person name="Barry K."/>
            <person name="Detter J.C."/>
            <person name="Glavina del Rio T."/>
            <person name="Hammon N."/>
            <person name="Israni S."/>
            <person name="Dalin E."/>
            <person name="Tice H."/>
            <person name="Pitluck S."/>
            <person name="Chertkov O."/>
            <person name="Brettin T."/>
            <person name="Bruce D."/>
            <person name="Han C."/>
            <person name="Schmutz J."/>
            <person name="Larimer F."/>
            <person name="Land M."/>
            <person name="Hauser L."/>
            <person name="Kyrpides N."/>
            <person name="Kim E."/>
            <person name="Richardson P."/>
            <person name="Mackenzie C."/>
            <person name="Choudhary M."/>
            <person name="Donohue T.J."/>
            <person name="Kaplan S."/>
        </authorList>
    </citation>
    <scope>NUCLEOTIDE SEQUENCE [LARGE SCALE GENOMIC DNA]</scope>
    <source>
        <strain>ATCC 17025 / ATH 2.4.3</strain>
    </source>
</reference>
<feature type="chain" id="PRO_1000063432" description="Phosphoribosyl-AMP cyclohydrolase">
    <location>
        <begin position="1"/>
        <end position="119"/>
    </location>
</feature>
<feature type="binding site" evidence="1">
    <location>
        <position position="77"/>
    </location>
    <ligand>
        <name>Mg(2+)</name>
        <dbReference type="ChEBI" id="CHEBI:18420"/>
    </ligand>
</feature>
<feature type="binding site" evidence="1">
    <location>
        <position position="78"/>
    </location>
    <ligand>
        <name>Zn(2+)</name>
        <dbReference type="ChEBI" id="CHEBI:29105"/>
        <note>ligand shared between dimeric partners</note>
    </ligand>
</feature>
<feature type="binding site" evidence="1">
    <location>
        <position position="79"/>
    </location>
    <ligand>
        <name>Mg(2+)</name>
        <dbReference type="ChEBI" id="CHEBI:18420"/>
    </ligand>
</feature>
<feature type="binding site" evidence="1">
    <location>
        <position position="81"/>
    </location>
    <ligand>
        <name>Mg(2+)</name>
        <dbReference type="ChEBI" id="CHEBI:18420"/>
    </ligand>
</feature>
<feature type="binding site" evidence="1">
    <location>
        <position position="94"/>
    </location>
    <ligand>
        <name>Zn(2+)</name>
        <dbReference type="ChEBI" id="CHEBI:29105"/>
        <note>ligand shared between dimeric partners</note>
    </ligand>
</feature>
<feature type="binding site" evidence="1">
    <location>
        <position position="101"/>
    </location>
    <ligand>
        <name>Zn(2+)</name>
        <dbReference type="ChEBI" id="CHEBI:29105"/>
        <note>ligand shared between dimeric partners</note>
    </ligand>
</feature>
<comment type="function">
    <text evidence="1">Catalyzes the hydrolysis of the adenine ring of phosphoribosyl-AMP.</text>
</comment>
<comment type="catalytic activity">
    <reaction evidence="1">
        <text>1-(5-phospho-beta-D-ribosyl)-5'-AMP + H2O = 1-(5-phospho-beta-D-ribosyl)-5-[(5-phospho-beta-D-ribosylamino)methylideneamino]imidazole-4-carboxamide</text>
        <dbReference type="Rhea" id="RHEA:20049"/>
        <dbReference type="ChEBI" id="CHEBI:15377"/>
        <dbReference type="ChEBI" id="CHEBI:58435"/>
        <dbReference type="ChEBI" id="CHEBI:59457"/>
        <dbReference type="EC" id="3.5.4.19"/>
    </reaction>
</comment>
<comment type="cofactor">
    <cofactor evidence="1">
        <name>Mg(2+)</name>
        <dbReference type="ChEBI" id="CHEBI:18420"/>
    </cofactor>
    <text evidence="1">Binds 1 Mg(2+) ion per subunit.</text>
</comment>
<comment type="cofactor">
    <cofactor evidence="1">
        <name>Zn(2+)</name>
        <dbReference type="ChEBI" id="CHEBI:29105"/>
    </cofactor>
    <text evidence="1">Binds 1 zinc ion per subunit.</text>
</comment>
<comment type="pathway">
    <text evidence="1">Amino-acid biosynthesis; L-histidine biosynthesis; L-histidine from 5-phospho-alpha-D-ribose 1-diphosphate: step 3/9.</text>
</comment>
<comment type="subunit">
    <text evidence="1">Homodimer.</text>
</comment>
<comment type="subcellular location">
    <subcellularLocation>
        <location evidence="1">Cytoplasm</location>
    </subcellularLocation>
</comment>
<comment type="similarity">
    <text evidence="1">Belongs to the PRA-CH family.</text>
</comment>
<proteinExistence type="inferred from homology"/>
<dbReference type="EC" id="3.5.4.19" evidence="1"/>
<dbReference type="EMBL" id="CP000661">
    <property type="protein sequence ID" value="ABP70064.1"/>
    <property type="molecule type" value="Genomic_DNA"/>
</dbReference>
<dbReference type="SMR" id="A4WRQ0"/>
<dbReference type="STRING" id="349102.Rsph17025_1163"/>
<dbReference type="KEGG" id="rsq:Rsph17025_1163"/>
<dbReference type="eggNOG" id="COG0139">
    <property type="taxonomic scope" value="Bacteria"/>
</dbReference>
<dbReference type="HOGENOM" id="CLU_048577_5_2_5"/>
<dbReference type="BioCyc" id="RSPH349102:G1G8M-1191-MONOMER"/>
<dbReference type="UniPathway" id="UPA00031">
    <property type="reaction ID" value="UER00008"/>
</dbReference>
<dbReference type="GO" id="GO:0005737">
    <property type="term" value="C:cytoplasm"/>
    <property type="evidence" value="ECO:0007669"/>
    <property type="project" value="UniProtKB-SubCell"/>
</dbReference>
<dbReference type="GO" id="GO:0000287">
    <property type="term" value="F:magnesium ion binding"/>
    <property type="evidence" value="ECO:0007669"/>
    <property type="project" value="UniProtKB-UniRule"/>
</dbReference>
<dbReference type="GO" id="GO:0004635">
    <property type="term" value="F:phosphoribosyl-AMP cyclohydrolase activity"/>
    <property type="evidence" value="ECO:0007669"/>
    <property type="project" value="UniProtKB-UniRule"/>
</dbReference>
<dbReference type="GO" id="GO:0008270">
    <property type="term" value="F:zinc ion binding"/>
    <property type="evidence" value="ECO:0007669"/>
    <property type="project" value="UniProtKB-UniRule"/>
</dbReference>
<dbReference type="GO" id="GO:0000105">
    <property type="term" value="P:L-histidine biosynthetic process"/>
    <property type="evidence" value="ECO:0007669"/>
    <property type="project" value="UniProtKB-UniRule"/>
</dbReference>
<dbReference type="FunFam" id="3.10.20.810:FF:000001">
    <property type="entry name" value="Histidine biosynthesis bifunctional protein HisIE"/>
    <property type="match status" value="1"/>
</dbReference>
<dbReference type="Gene3D" id="3.10.20.810">
    <property type="entry name" value="Phosphoribosyl-AMP cyclohydrolase"/>
    <property type="match status" value="1"/>
</dbReference>
<dbReference type="HAMAP" id="MF_01021">
    <property type="entry name" value="HisI"/>
    <property type="match status" value="1"/>
</dbReference>
<dbReference type="InterPro" id="IPR026660">
    <property type="entry name" value="PRA-CH"/>
</dbReference>
<dbReference type="InterPro" id="IPR002496">
    <property type="entry name" value="PRib_AMP_CycHydrolase_dom"/>
</dbReference>
<dbReference type="InterPro" id="IPR038019">
    <property type="entry name" value="PRib_AMP_CycHydrolase_sf"/>
</dbReference>
<dbReference type="NCBIfam" id="NF000768">
    <property type="entry name" value="PRK00051.1"/>
    <property type="match status" value="1"/>
</dbReference>
<dbReference type="PANTHER" id="PTHR42945">
    <property type="entry name" value="HISTIDINE BIOSYNTHESIS BIFUNCTIONAL PROTEIN"/>
    <property type="match status" value="1"/>
</dbReference>
<dbReference type="PANTHER" id="PTHR42945:SF1">
    <property type="entry name" value="HISTIDINE BIOSYNTHESIS BIFUNCTIONAL PROTEIN HIS7"/>
    <property type="match status" value="1"/>
</dbReference>
<dbReference type="Pfam" id="PF01502">
    <property type="entry name" value="PRA-CH"/>
    <property type="match status" value="1"/>
</dbReference>
<dbReference type="SUPFAM" id="SSF141734">
    <property type="entry name" value="HisI-like"/>
    <property type="match status" value="1"/>
</dbReference>
<keyword id="KW-0028">Amino-acid biosynthesis</keyword>
<keyword id="KW-0963">Cytoplasm</keyword>
<keyword id="KW-0368">Histidine biosynthesis</keyword>
<keyword id="KW-0378">Hydrolase</keyword>
<keyword id="KW-0460">Magnesium</keyword>
<keyword id="KW-0479">Metal-binding</keyword>
<keyword id="KW-0862">Zinc</keyword>
<name>HIS3_CERS5</name>
<organism>
    <name type="scientific">Cereibacter sphaeroides (strain ATCC 17025 / ATH 2.4.3)</name>
    <name type="common">Rhodobacter sphaeroides</name>
    <dbReference type="NCBI Taxonomy" id="349102"/>
    <lineage>
        <taxon>Bacteria</taxon>
        <taxon>Pseudomonadati</taxon>
        <taxon>Pseudomonadota</taxon>
        <taxon>Alphaproteobacteria</taxon>
        <taxon>Rhodobacterales</taxon>
        <taxon>Paracoccaceae</taxon>
        <taxon>Cereibacter</taxon>
    </lineage>
</organism>
<accession>A4WRQ0</accession>